<dbReference type="EMBL" id="AP006841">
    <property type="protein sequence ID" value="BAD49353.1"/>
    <property type="molecule type" value="Genomic_DNA"/>
</dbReference>
<dbReference type="RefSeq" id="WP_005815482.1">
    <property type="nucleotide sequence ID" value="NC_006347.1"/>
</dbReference>
<dbReference type="RefSeq" id="YP_099887.1">
    <property type="nucleotide sequence ID" value="NC_006347.1"/>
</dbReference>
<dbReference type="SMR" id="Q64T26"/>
<dbReference type="STRING" id="295405.BF2603"/>
<dbReference type="KEGG" id="bfr:BF2603"/>
<dbReference type="PATRIC" id="fig|295405.11.peg.2513"/>
<dbReference type="HOGENOM" id="CLU_016535_2_0_10"/>
<dbReference type="OrthoDB" id="9780552at2"/>
<dbReference type="Proteomes" id="UP000002197">
    <property type="component" value="Chromosome"/>
</dbReference>
<dbReference type="GO" id="GO:0005886">
    <property type="term" value="C:plasma membrane"/>
    <property type="evidence" value="ECO:0007669"/>
    <property type="project" value="UniProtKB-SubCell"/>
</dbReference>
<dbReference type="GO" id="GO:0032977">
    <property type="term" value="F:membrane insertase activity"/>
    <property type="evidence" value="ECO:0007669"/>
    <property type="project" value="InterPro"/>
</dbReference>
<dbReference type="GO" id="GO:0051205">
    <property type="term" value="P:protein insertion into membrane"/>
    <property type="evidence" value="ECO:0007669"/>
    <property type="project" value="TreeGrafter"/>
</dbReference>
<dbReference type="GO" id="GO:0015031">
    <property type="term" value="P:protein transport"/>
    <property type="evidence" value="ECO:0007669"/>
    <property type="project" value="UniProtKB-KW"/>
</dbReference>
<dbReference type="CDD" id="cd20070">
    <property type="entry name" value="5TM_YidC_Alb3"/>
    <property type="match status" value="1"/>
</dbReference>
<dbReference type="CDD" id="cd19961">
    <property type="entry name" value="EcYidC-like_peri"/>
    <property type="match status" value="1"/>
</dbReference>
<dbReference type="Gene3D" id="2.70.98.90">
    <property type="match status" value="1"/>
</dbReference>
<dbReference type="HAMAP" id="MF_01810">
    <property type="entry name" value="YidC_type1"/>
    <property type="match status" value="1"/>
</dbReference>
<dbReference type="InterPro" id="IPR019998">
    <property type="entry name" value="Membr_insert_YidC"/>
</dbReference>
<dbReference type="InterPro" id="IPR028053">
    <property type="entry name" value="Membr_insert_YidC_N"/>
</dbReference>
<dbReference type="InterPro" id="IPR001708">
    <property type="entry name" value="YidC/ALB3/OXA1/COX18"/>
</dbReference>
<dbReference type="InterPro" id="IPR028055">
    <property type="entry name" value="YidC/Oxa/ALB_C"/>
</dbReference>
<dbReference type="InterPro" id="IPR047196">
    <property type="entry name" value="YidC_ALB_C"/>
</dbReference>
<dbReference type="InterPro" id="IPR038221">
    <property type="entry name" value="YidC_periplasmic_sf"/>
</dbReference>
<dbReference type="NCBIfam" id="NF002356">
    <property type="entry name" value="PRK01318.2-3"/>
    <property type="match status" value="1"/>
</dbReference>
<dbReference type="NCBIfam" id="TIGR03593">
    <property type="entry name" value="yidC_nterm"/>
    <property type="match status" value="1"/>
</dbReference>
<dbReference type="NCBIfam" id="TIGR03592">
    <property type="entry name" value="yidC_oxa1_cterm"/>
    <property type="match status" value="1"/>
</dbReference>
<dbReference type="PANTHER" id="PTHR12428:SF65">
    <property type="entry name" value="CYTOCHROME C OXIDASE ASSEMBLY PROTEIN COX18, MITOCHONDRIAL"/>
    <property type="match status" value="1"/>
</dbReference>
<dbReference type="PANTHER" id="PTHR12428">
    <property type="entry name" value="OXA1"/>
    <property type="match status" value="1"/>
</dbReference>
<dbReference type="Pfam" id="PF02096">
    <property type="entry name" value="60KD_IMP"/>
    <property type="match status" value="1"/>
</dbReference>
<dbReference type="Pfam" id="PF14849">
    <property type="entry name" value="YidC_periplas"/>
    <property type="match status" value="1"/>
</dbReference>
<dbReference type="PRINTS" id="PR00701">
    <property type="entry name" value="60KDINNERMP"/>
</dbReference>
<proteinExistence type="inferred from homology"/>
<reference key="1">
    <citation type="journal article" date="2004" name="Proc. Natl. Acad. Sci. U.S.A.">
        <title>Genomic analysis of Bacteroides fragilis reveals extensive DNA inversions regulating cell surface adaptation.</title>
        <authorList>
            <person name="Kuwahara T."/>
            <person name="Yamashita A."/>
            <person name="Hirakawa H."/>
            <person name="Nakayama H."/>
            <person name="Toh H."/>
            <person name="Okada N."/>
            <person name="Kuhara S."/>
            <person name="Hattori M."/>
            <person name="Hayashi T."/>
            <person name="Ohnishi Y."/>
        </authorList>
    </citation>
    <scope>NUCLEOTIDE SEQUENCE [LARGE SCALE GENOMIC DNA]</scope>
    <source>
        <strain>YCH46</strain>
    </source>
</reference>
<organism>
    <name type="scientific">Bacteroides fragilis (strain YCH46)</name>
    <dbReference type="NCBI Taxonomy" id="295405"/>
    <lineage>
        <taxon>Bacteria</taxon>
        <taxon>Pseudomonadati</taxon>
        <taxon>Bacteroidota</taxon>
        <taxon>Bacteroidia</taxon>
        <taxon>Bacteroidales</taxon>
        <taxon>Bacteroidaceae</taxon>
        <taxon>Bacteroides</taxon>
    </lineage>
</organism>
<accession>Q64T26</accession>
<evidence type="ECO:0000255" key="1">
    <source>
        <dbReference type="HAMAP-Rule" id="MF_01810"/>
    </source>
</evidence>
<feature type="chain" id="PRO_1000070059" description="Membrane protein insertase YidC">
    <location>
        <begin position="1"/>
        <end position="618"/>
    </location>
</feature>
<feature type="transmembrane region" description="Helical" evidence="1">
    <location>
        <begin position="3"/>
        <end position="23"/>
    </location>
</feature>
<feature type="transmembrane region" description="Helical" evidence="1">
    <location>
        <begin position="363"/>
        <end position="383"/>
    </location>
</feature>
<feature type="transmembrane region" description="Helical" evidence="1">
    <location>
        <begin position="439"/>
        <end position="459"/>
    </location>
</feature>
<feature type="transmembrane region" description="Helical" evidence="1">
    <location>
        <begin position="478"/>
        <end position="498"/>
    </location>
</feature>
<feature type="transmembrane region" description="Helical" evidence="1">
    <location>
        <begin position="520"/>
        <end position="540"/>
    </location>
</feature>
<feature type="transmembrane region" description="Helical" evidence="1">
    <location>
        <begin position="545"/>
        <end position="565"/>
    </location>
</feature>
<gene>
    <name evidence="1" type="primary">yidC</name>
    <name type="ordered locus">BF2603</name>
</gene>
<keyword id="KW-1003">Cell membrane</keyword>
<keyword id="KW-0143">Chaperone</keyword>
<keyword id="KW-0472">Membrane</keyword>
<keyword id="KW-0653">Protein transport</keyword>
<keyword id="KW-0812">Transmembrane</keyword>
<keyword id="KW-1133">Transmembrane helix</keyword>
<keyword id="KW-0813">Transport</keyword>
<comment type="function">
    <text evidence="1">Required for the insertion and/or proper folding and/or complex formation of integral membrane proteins into the membrane. Involved in integration of membrane proteins that insert both dependently and independently of the Sec translocase complex, as well as at least some lipoproteins. Aids folding of multispanning membrane proteins.</text>
</comment>
<comment type="subunit">
    <text evidence="1">Interacts with the Sec translocase complex via SecD. Specifically interacts with transmembrane segments of nascent integral membrane proteins during membrane integration.</text>
</comment>
<comment type="subcellular location">
    <subcellularLocation>
        <location evidence="1">Cell membrane</location>
        <topology evidence="1">Multi-pass membrane protein</topology>
    </subcellularLocation>
</comment>
<comment type="similarity">
    <text evidence="1">Belongs to the OXA1/ALB3/YidC family. Type 1 subfamily.</text>
</comment>
<protein>
    <recommendedName>
        <fullName evidence="1">Membrane protein insertase YidC</fullName>
    </recommendedName>
    <alternativeName>
        <fullName evidence="1">Foldase YidC</fullName>
    </alternativeName>
    <alternativeName>
        <fullName evidence="1">Membrane integrase YidC</fullName>
    </alternativeName>
    <alternativeName>
        <fullName evidence="1">Membrane protein YidC</fullName>
    </alternativeName>
</protein>
<name>YIDC_BACFR</name>
<sequence length="618" mass="70883">MDKNTITGLVLIGILLVGFSFLSRPSEEQIAAQKRYYDSIAVVQQQEEALRAKTEAALANEKEETAADSASLFFNATKGKEAFTTIQNNLVEITLDNKGGRVYSALLKNYMGQDKKPVVLFNGSDASMNFNFYNKKGALQTKDFYFEAVNKTDSSVTMRLAADSASYIDFIYTLKPDNYLMSFVIKATGMDGKLAASTNYVDISWSQRARQIEKGYTYENRLADLTYKYTGDDVDNLSASKDDEKSVSERLDWIAFKNQFFSSVFIAEQDFEKTTVKSKMEKQGSGYIKDYSAEMSTFFDPTGKQPTDMYFYFGPNHYKTLTALDKGREEKWELNNLVYLGWPLIRWINKWITINVFDWLSGWGLSMGIVLLLLTIMVKIVVFPATWKTYMSSAKMRVLKPKIDEINKKYPKQEDAMKKQQEVMGLYSQYGVSPMGGCLPMLLQFPILMALFMFVPSAIELRQQSFLWADDLSTYDAFITFPFHIPFLGNHLSLFCLLMTVTNILNTKYTMQQQDTGAQPQMAAMKWMMYLMPIMFLFVLNDYPSGLNYYYFISTLISVVTMIILRRTTDENKLLTELEAKKKDPKQMKKTGFAARLEAMQKQQEQLAKERANKQNKK</sequence>